<feature type="chain" id="PRO_1000121075" description="Beta-hexosaminidase">
    <location>
        <begin position="1"/>
        <end position="335"/>
    </location>
</feature>
<feature type="active site" description="Proton donor/acceptor" evidence="1">
    <location>
        <position position="176"/>
    </location>
</feature>
<feature type="active site" description="Nucleophile" evidence="1">
    <location>
        <position position="247"/>
    </location>
</feature>
<feature type="binding site" evidence="1">
    <location>
        <position position="60"/>
    </location>
    <ligand>
        <name>substrate</name>
    </ligand>
</feature>
<feature type="binding site" evidence="1">
    <location>
        <position position="68"/>
    </location>
    <ligand>
        <name>substrate</name>
    </ligand>
</feature>
<feature type="binding site" evidence="1">
    <location>
        <position position="133"/>
    </location>
    <ligand>
        <name>substrate</name>
    </ligand>
</feature>
<feature type="binding site" evidence="1">
    <location>
        <begin position="163"/>
        <end position="164"/>
    </location>
    <ligand>
        <name>substrate</name>
    </ligand>
</feature>
<feature type="site" description="Important for catalytic activity" evidence="1">
    <location>
        <position position="174"/>
    </location>
</feature>
<protein>
    <recommendedName>
        <fullName evidence="1">Beta-hexosaminidase</fullName>
        <ecNumber evidence="1">3.2.1.52</ecNumber>
    </recommendedName>
    <alternativeName>
        <fullName evidence="1">Beta-N-acetylhexosaminidase</fullName>
    </alternativeName>
    <alternativeName>
        <fullName evidence="1">N-acetyl-beta-glucosaminidase</fullName>
    </alternativeName>
</protein>
<comment type="function">
    <text evidence="1">Plays a role in peptidoglycan recycling by cleaving the terminal beta-1,4-linked N-acetylglucosamine (GlcNAc) from peptide-linked peptidoglycan fragments, giving rise to free GlcNAc, anhydro-N-acetylmuramic acid and anhydro-N-acetylmuramic acid-linked peptides.</text>
</comment>
<comment type="catalytic activity">
    <reaction evidence="1">
        <text>Hydrolysis of terminal non-reducing N-acetyl-D-hexosamine residues in N-acetyl-beta-D-hexosaminides.</text>
        <dbReference type="EC" id="3.2.1.52"/>
    </reaction>
</comment>
<comment type="pathway">
    <text evidence="1">Cell wall biogenesis; peptidoglycan recycling.</text>
</comment>
<comment type="subcellular location">
    <subcellularLocation>
        <location evidence="1">Cytoplasm</location>
    </subcellularLocation>
</comment>
<comment type="similarity">
    <text evidence="1">Belongs to the glycosyl hydrolase 3 family. NagZ subfamily.</text>
</comment>
<evidence type="ECO:0000255" key="1">
    <source>
        <dbReference type="HAMAP-Rule" id="MF_00364"/>
    </source>
</evidence>
<organism>
    <name type="scientific">Stenotrophomonas maltophilia (strain R551-3)</name>
    <dbReference type="NCBI Taxonomy" id="391008"/>
    <lineage>
        <taxon>Bacteria</taxon>
        <taxon>Pseudomonadati</taxon>
        <taxon>Pseudomonadota</taxon>
        <taxon>Gammaproteobacteria</taxon>
        <taxon>Lysobacterales</taxon>
        <taxon>Lysobacteraceae</taxon>
        <taxon>Stenotrophomonas</taxon>
        <taxon>Stenotrophomonas maltophilia group</taxon>
    </lineage>
</organism>
<name>NAGZ_STRM5</name>
<reference key="1">
    <citation type="submission" date="2008-06" db="EMBL/GenBank/DDBJ databases">
        <title>Complete sequence of Stenotrophomonas maltophilia R551-3.</title>
        <authorList>
            <consortium name="US DOE Joint Genome Institute"/>
            <person name="Lucas S."/>
            <person name="Copeland A."/>
            <person name="Lapidus A."/>
            <person name="Glavina del Rio T."/>
            <person name="Dalin E."/>
            <person name="Tice H."/>
            <person name="Pitluck S."/>
            <person name="Chain P."/>
            <person name="Malfatti S."/>
            <person name="Shin M."/>
            <person name="Vergez L."/>
            <person name="Lang D."/>
            <person name="Schmutz J."/>
            <person name="Larimer F."/>
            <person name="Land M."/>
            <person name="Hauser L."/>
            <person name="Kyrpides N."/>
            <person name="Mikhailova N."/>
            <person name="Taghavi S."/>
            <person name="Monchy S."/>
            <person name="Newman L."/>
            <person name="Vangronsveld J."/>
            <person name="van der Lelie D."/>
            <person name="Richardson P."/>
        </authorList>
    </citation>
    <scope>NUCLEOTIDE SEQUENCE [LARGE SCALE GENOMIC DNA]</scope>
    <source>
        <strain>R551-3</strain>
    </source>
</reference>
<dbReference type="EC" id="3.2.1.52" evidence="1"/>
<dbReference type="EMBL" id="CP001111">
    <property type="protein sequence ID" value="ACF52667.1"/>
    <property type="molecule type" value="Genomic_DNA"/>
</dbReference>
<dbReference type="RefSeq" id="WP_006382799.1">
    <property type="nucleotide sequence ID" value="NC_011071.1"/>
</dbReference>
<dbReference type="SMR" id="B4SRK3"/>
<dbReference type="STRING" id="391008.Smal_2968"/>
<dbReference type="CAZy" id="GH3">
    <property type="family name" value="Glycoside Hydrolase Family 3"/>
</dbReference>
<dbReference type="KEGG" id="smt:Smal_2968"/>
<dbReference type="eggNOG" id="COG1472">
    <property type="taxonomic scope" value="Bacteria"/>
</dbReference>
<dbReference type="HOGENOM" id="CLU_008392_0_0_6"/>
<dbReference type="OrthoDB" id="9786661at2"/>
<dbReference type="UniPathway" id="UPA00544"/>
<dbReference type="Proteomes" id="UP000001867">
    <property type="component" value="Chromosome"/>
</dbReference>
<dbReference type="GO" id="GO:0005737">
    <property type="term" value="C:cytoplasm"/>
    <property type="evidence" value="ECO:0007669"/>
    <property type="project" value="UniProtKB-SubCell"/>
</dbReference>
<dbReference type="GO" id="GO:0004563">
    <property type="term" value="F:beta-N-acetylhexosaminidase activity"/>
    <property type="evidence" value="ECO:0007669"/>
    <property type="project" value="UniProtKB-UniRule"/>
</dbReference>
<dbReference type="GO" id="GO:0005975">
    <property type="term" value="P:carbohydrate metabolic process"/>
    <property type="evidence" value="ECO:0007669"/>
    <property type="project" value="InterPro"/>
</dbReference>
<dbReference type="GO" id="GO:0051301">
    <property type="term" value="P:cell division"/>
    <property type="evidence" value="ECO:0007669"/>
    <property type="project" value="UniProtKB-KW"/>
</dbReference>
<dbReference type="GO" id="GO:0071555">
    <property type="term" value="P:cell wall organization"/>
    <property type="evidence" value="ECO:0007669"/>
    <property type="project" value="UniProtKB-KW"/>
</dbReference>
<dbReference type="GO" id="GO:0009252">
    <property type="term" value="P:peptidoglycan biosynthetic process"/>
    <property type="evidence" value="ECO:0007669"/>
    <property type="project" value="UniProtKB-KW"/>
</dbReference>
<dbReference type="GO" id="GO:0009254">
    <property type="term" value="P:peptidoglycan turnover"/>
    <property type="evidence" value="ECO:0007669"/>
    <property type="project" value="UniProtKB-UniRule"/>
</dbReference>
<dbReference type="GO" id="GO:0008360">
    <property type="term" value="P:regulation of cell shape"/>
    <property type="evidence" value="ECO:0007669"/>
    <property type="project" value="UniProtKB-KW"/>
</dbReference>
<dbReference type="FunFam" id="3.20.20.300:FF:000001">
    <property type="entry name" value="Beta-hexosaminidase"/>
    <property type="match status" value="1"/>
</dbReference>
<dbReference type="Gene3D" id="3.20.20.300">
    <property type="entry name" value="Glycoside hydrolase, family 3, N-terminal domain"/>
    <property type="match status" value="1"/>
</dbReference>
<dbReference type="HAMAP" id="MF_00364">
    <property type="entry name" value="NagZ"/>
    <property type="match status" value="1"/>
</dbReference>
<dbReference type="InterPro" id="IPR022956">
    <property type="entry name" value="Beta_hexosaminidase_bac"/>
</dbReference>
<dbReference type="InterPro" id="IPR019800">
    <property type="entry name" value="Glyco_hydro_3_AS"/>
</dbReference>
<dbReference type="InterPro" id="IPR001764">
    <property type="entry name" value="Glyco_hydro_3_N"/>
</dbReference>
<dbReference type="InterPro" id="IPR036962">
    <property type="entry name" value="Glyco_hydro_3_N_sf"/>
</dbReference>
<dbReference type="InterPro" id="IPR017853">
    <property type="entry name" value="Glycoside_hydrolase_SF"/>
</dbReference>
<dbReference type="InterPro" id="IPR050226">
    <property type="entry name" value="NagZ_Beta-hexosaminidase"/>
</dbReference>
<dbReference type="NCBIfam" id="NF003740">
    <property type="entry name" value="PRK05337.1"/>
    <property type="match status" value="1"/>
</dbReference>
<dbReference type="PANTHER" id="PTHR30480:SF13">
    <property type="entry name" value="BETA-HEXOSAMINIDASE"/>
    <property type="match status" value="1"/>
</dbReference>
<dbReference type="PANTHER" id="PTHR30480">
    <property type="entry name" value="BETA-HEXOSAMINIDASE-RELATED"/>
    <property type="match status" value="1"/>
</dbReference>
<dbReference type="Pfam" id="PF00933">
    <property type="entry name" value="Glyco_hydro_3"/>
    <property type="match status" value="1"/>
</dbReference>
<dbReference type="SUPFAM" id="SSF51445">
    <property type="entry name" value="(Trans)glycosidases"/>
    <property type="match status" value="1"/>
</dbReference>
<dbReference type="PROSITE" id="PS00775">
    <property type="entry name" value="GLYCOSYL_HYDROL_F3"/>
    <property type="match status" value="1"/>
</dbReference>
<keyword id="KW-0131">Cell cycle</keyword>
<keyword id="KW-0132">Cell division</keyword>
<keyword id="KW-0133">Cell shape</keyword>
<keyword id="KW-0961">Cell wall biogenesis/degradation</keyword>
<keyword id="KW-0963">Cytoplasm</keyword>
<keyword id="KW-0326">Glycosidase</keyword>
<keyword id="KW-0378">Hydrolase</keyword>
<keyword id="KW-0573">Peptidoglycan synthesis</keyword>
<gene>
    <name evidence="1" type="primary">nagZ</name>
    <name type="ordered locus">Smal_2968</name>
</gene>
<sequence>MLLIGVAGTELTAQERDWLQHDAVAGVVLFKRNFASRQQVTDLSAAIRAAAPRPQLICVDQEGGRVQRFREGYSELPPLQDIGALYATDPQQALALAEQHAWLMASEVRASGLDLSFAPVVDLGRGNRAIGNRAFSEDPQVVAAFTAAYVRGMHAVGMAATLKHFPGHGTVLEDTHVDTAIDPRALDELRAQDLVPFQAGIAAGADAVMMAHVVYPQVAPEPAGYSPRWIQDILRGELGFRGVVFSDDIGMAASHSAGGVPARVHAHLDAGCDVVLVCHPELVDEALHAVQGRSLNTAALLGLLGRGALGWDGLLADARHGDTQSHLLETLGRTV</sequence>
<accession>B4SRK3</accession>
<proteinExistence type="inferred from homology"/>